<reference key="1">
    <citation type="submission" date="2005-12" db="EMBL/GenBank/DDBJ databases">
        <authorList>
            <consortium name="NIH - Mammalian Gene Collection (MGC) project"/>
        </authorList>
    </citation>
    <scope>NUCLEOTIDE SEQUENCE [LARGE SCALE MRNA]</scope>
    <source>
        <strain>Crossbred X Angus</strain>
        <tissue>Liver</tissue>
    </source>
</reference>
<protein>
    <recommendedName>
        <fullName>Outer dense fiber protein 2</fullName>
    </recommendedName>
    <alternativeName>
        <fullName>Cenexin</fullName>
    </alternativeName>
    <alternativeName>
        <fullName>Outer dense fiber of sperm tails protein 2</fullName>
    </alternativeName>
</protein>
<dbReference type="EMBL" id="BC111268">
    <property type="protein sequence ID" value="AAI11269.1"/>
    <property type="molecule type" value="mRNA"/>
</dbReference>
<dbReference type="RefSeq" id="NP_001033269.1">
    <property type="nucleotide sequence ID" value="NM_001038180.2"/>
</dbReference>
<dbReference type="SMR" id="Q2T9U2"/>
<dbReference type="FunCoup" id="Q2T9U2">
    <property type="interactions" value="1"/>
</dbReference>
<dbReference type="STRING" id="9913.ENSBTAP00000020325"/>
<dbReference type="PaxDb" id="9913-ENSBTAP00000020325"/>
<dbReference type="GeneID" id="539043"/>
<dbReference type="KEGG" id="bta:539043"/>
<dbReference type="CTD" id="4957"/>
<dbReference type="eggNOG" id="ENOG502QUXQ">
    <property type="taxonomic scope" value="Eukaryota"/>
</dbReference>
<dbReference type="InParanoid" id="Q2T9U2"/>
<dbReference type="OrthoDB" id="413404at2759"/>
<dbReference type="Proteomes" id="UP000009136">
    <property type="component" value="Unplaced"/>
</dbReference>
<dbReference type="GO" id="GO:0005814">
    <property type="term" value="C:centriole"/>
    <property type="evidence" value="ECO:0007669"/>
    <property type="project" value="UniProtKB-SubCell"/>
</dbReference>
<dbReference type="GO" id="GO:0005813">
    <property type="term" value="C:centrosome"/>
    <property type="evidence" value="ECO:0000250"/>
    <property type="project" value="UniProtKB"/>
</dbReference>
<dbReference type="GO" id="GO:0005737">
    <property type="term" value="C:cytoplasm"/>
    <property type="evidence" value="ECO:0007669"/>
    <property type="project" value="UniProtKB-KW"/>
</dbReference>
<dbReference type="GO" id="GO:0005874">
    <property type="term" value="C:microtubule"/>
    <property type="evidence" value="ECO:0007669"/>
    <property type="project" value="UniProtKB-KW"/>
</dbReference>
<dbReference type="GO" id="GO:0036126">
    <property type="term" value="C:sperm flagellum"/>
    <property type="evidence" value="ECO:0000250"/>
    <property type="project" value="UniProtKB"/>
</dbReference>
<dbReference type="GO" id="GO:0097225">
    <property type="term" value="C:sperm midpiece"/>
    <property type="evidence" value="ECO:0000250"/>
    <property type="project" value="UniProtKB"/>
</dbReference>
<dbReference type="GO" id="GO:0097228">
    <property type="term" value="C:sperm principal piece"/>
    <property type="evidence" value="ECO:0000250"/>
    <property type="project" value="UniProtKB"/>
</dbReference>
<dbReference type="GO" id="GO:0000922">
    <property type="term" value="C:spindle pole"/>
    <property type="evidence" value="ECO:0007669"/>
    <property type="project" value="UniProtKB-SubCell"/>
</dbReference>
<dbReference type="GO" id="GO:0030154">
    <property type="term" value="P:cell differentiation"/>
    <property type="evidence" value="ECO:0007669"/>
    <property type="project" value="UniProtKB-KW"/>
</dbReference>
<dbReference type="GO" id="GO:1902017">
    <property type="term" value="P:regulation of cilium assembly"/>
    <property type="evidence" value="ECO:0000318"/>
    <property type="project" value="GO_Central"/>
</dbReference>
<dbReference type="GO" id="GO:0007283">
    <property type="term" value="P:spermatogenesis"/>
    <property type="evidence" value="ECO:0007669"/>
    <property type="project" value="UniProtKB-KW"/>
</dbReference>
<dbReference type="InterPro" id="IPR026099">
    <property type="entry name" value="Odf2-rel"/>
</dbReference>
<dbReference type="PANTHER" id="PTHR23162">
    <property type="entry name" value="OUTER DENSE FIBER OF SPERM TAILS 2"/>
    <property type="match status" value="1"/>
</dbReference>
<dbReference type="PANTHER" id="PTHR23162:SF8">
    <property type="entry name" value="OUTER DENSE FIBER PROTEIN 2"/>
    <property type="match status" value="1"/>
</dbReference>
<proteinExistence type="evidence at transcript level"/>
<sequence>MSASSSGGSPRFPSCGKNGVTSLTQKKVLRTPCGAPSVTVTKSHKRGMKGDTVNVRRSVRVKTKVPWMPPGKSSARHVGCNWENPPHCLEITPPSSEKLVSVMRLSDLSTEDDDSGHCKMNRYDKKIDSLMNAVGCLKSEVKMQKGERQMAKRFLEERKEELEEVAQELAETEHENTVLRHNIERIKEEKDYTMLQKKHLQQEKECLMSKLVEAEMDGAAAAKQVMALKDTIGKLKSEKQMTCSDINTLTRQKELLLQKLSTFEETNRTLRDLLREQHCKEDSERLMEQQGTLLKRLAEADSEKARLLLLLQDKDKEVEELLQEIQCEKAQAKTASELSKSMETMRGHLQAQLRCKEAENSRLCMQIKNLERSGNQHKAEVEAIMEQLKELKQKGERDKESLKKAIRAQKERAEKSEEYAEQLHVQLADKDLYVAEALSTLESWRSRYNQVVKDKGDLELEIIVLNDRVTDLVNQQQTLEEKMREDRDSLVERLHRQTAEYSAFKLENERLKASFAPMEDKLNQAHIEVQQLKASVKNYEGMIDNYKSQVMKTRLEADEVAAQLERCDKENKILKDEMNKEIEAARRQFQSQLADLQQLPDILKITEAKLAECQDQLQGYERKNIDLTAIISDLRSRVRDWQKGSHELARAGARLPR</sequence>
<name>ODFP2_BOVIN</name>
<keyword id="KW-0966">Cell projection</keyword>
<keyword id="KW-0969">Cilium</keyword>
<keyword id="KW-0175">Coiled coil</keyword>
<keyword id="KW-0963">Cytoplasm</keyword>
<keyword id="KW-0206">Cytoskeleton</keyword>
<keyword id="KW-0217">Developmental protein</keyword>
<keyword id="KW-0221">Differentiation</keyword>
<keyword id="KW-0282">Flagellum</keyword>
<keyword id="KW-1017">Isopeptide bond</keyword>
<keyword id="KW-0493">Microtubule</keyword>
<keyword id="KW-0597">Phosphoprotein</keyword>
<keyword id="KW-1185">Reference proteome</keyword>
<keyword id="KW-0744">Spermatogenesis</keyword>
<keyword id="KW-0832">Ubl conjugation</keyword>
<evidence type="ECO:0000250" key="1">
    <source>
        <dbReference type="UniProtKB" id="A3KGV1"/>
    </source>
</evidence>
<evidence type="ECO:0000250" key="2">
    <source>
        <dbReference type="UniProtKB" id="Q2MJU7"/>
    </source>
</evidence>
<evidence type="ECO:0000250" key="3">
    <source>
        <dbReference type="UniProtKB" id="Q5BJF6"/>
    </source>
</evidence>
<evidence type="ECO:0000250" key="4">
    <source>
        <dbReference type="UniProtKB" id="Q6AYX5"/>
    </source>
</evidence>
<evidence type="ECO:0000255" key="5"/>
<evidence type="ECO:0000305" key="6"/>
<feature type="chain" id="PRO_0000299456" description="Outer dense fiber protein 2">
    <location>
        <begin position="1"/>
        <end position="657"/>
    </location>
</feature>
<feature type="coiled-coil region" evidence="5">
    <location>
        <begin position="144"/>
        <end position="423"/>
    </location>
</feature>
<feature type="coiled-coil region" evidence="5">
    <location>
        <begin position="461"/>
        <end position="635"/>
    </location>
</feature>
<feature type="modified residue" description="Phosphoserine" evidence="4">
    <location>
        <position position="73"/>
    </location>
</feature>
<feature type="modified residue" description="Phosphoserine" evidence="4">
    <location>
        <position position="74"/>
    </location>
</feature>
<feature type="modified residue" description="Phosphothreonine" evidence="4">
    <location>
        <position position="92"/>
    </location>
</feature>
<feature type="modified residue" description="Phosphoserine; by TSSK4" evidence="1">
    <location>
        <position position="95"/>
    </location>
</feature>
<feature type="modified residue" description="Phosphoserine" evidence="4">
    <location>
        <position position="106"/>
    </location>
</feature>
<feature type="modified residue" description="Phosphoserine" evidence="4">
    <location>
        <position position="109"/>
    </location>
</feature>
<feature type="modified residue" description="Phosphothreonine" evidence="4">
    <location>
        <position position="110"/>
    </location>
</feature>
<feature type="modified residue" description="Phosphoserine" evidence="4">
    <location>
        <position position="115"/>
    </location>
</feature>
<feature type="modified residue" description="Phosphoserine" evidence="4">
    <location>
        <position position="129"/>
    </location>
</feature>
<feature type="modified residue" description="Phosphoserine" evidence="4">
    <location>
        <position position="139"/>
    </location>
</feature>
<feature type="modified residue" description="Phosphothreonine" evidence="3">
    <location>
        <position position="231"/>
    </location>
</feature>
<feature type="modified residue" description="Phosphoserine" evidence="4">
    <location>
        <position position="261"/>
    </location>
</feature>
<feature type="modified residue" description="Phosphoserine" evidence="4">
    <location>
        <position position="632"/>
    </location>
</feature>
<feature type="cross-link" description="Glycyl lysine isopeptide (Lys-Gly) (interchain with G-Cter in SUMO2)" evidence="3">
    <location>
        <position position="138"/>
    </location>
</feature>
<organism>
    <name type="scientific">Bos taurus</name>
    <name type="common">Bovine</name>
    <dbReference type="NCBI Taxonomy" id="9913"/>
    <lineage>
        <taxon>Eukaryota</taxon>
        <taxon>Metazoa</taxon>
        <taxon>Chordata</taxon>
        <taxon>Craniata</taxon>
        <taxon>Vertebrata</taxon>
        <taxon>Euteleostomi</taxon>
        <taxon>Mammalia</taxon>
        <taxon>Eutheria</taxon>
        <taxon>Laurasiatheria</taxon>
        <taxon>Artiodactyla</taxon>
        <taxon>Ruminantia</taxon>
        <taxon>Pecora</taxon>
        <taxon>Bovidae</taxon>
        <taxon>Bovinae</taxon>
        <taxon>Bos</taxon>
    </lineage>
</organism>
<accession>Q2T9U2</accession>
<gene>
    <name type="primary">ODF2</name>
</gene>
<comment type="function">
    <text evidence="3">Seems to be a major component of sperm tail outer dense fibers (ODF). ODFs are filamentous structures located on the outside of the axoneme in the midpiece and principal piece of the mammalian sperm tail and may help to maintain the passive elastic structures and elastic recoil of the sperm tail. May have a modulating influence on sperm motility. Functions as a general scaffold protein that is specifically localized at the distal/subdistal appendages of mother centrioles. Component of the centrosome matrix required for the localization of PLK1 and NIN to the centrosomes. Required for the formation and/or maintenance of normal CETN1 assembly (By similarity).</text>
</comment>
<comment type="subunit">
    <text evidence="1 3">Self-associates. Associates with microtubules and forms a fibrillar structure partially linked to the microtubule network. Interacts via its C-terminus with PLK1. Interacts with ODF1. Interacts with MARK4; the interaction is required for localization of ODF2 to centrioles. Interacts with TSSK4. Interacts with AKNA (By similarity). Interacts with CFAP58 (By similarity). Interacts with BBOF1 (By similarity). Interacts with CCDC38 (By similarity). Interacts with CCDC42 (By similarity).</text>
</comment>
<comment type="subcellular location">
    <subcellularLocation>
        <location evidence="1">Cytoplasm</location>
        <location evidence="1">Cytoskeleton</location>
        <location evidence="1">Microtubule organizing center</location>
        <location evidence="1">Centrosome</location>
    </subcellularLocation>
    <subcellularLocation>
        <location evidence="1">Cell projection</location>
        <location evidence="1">Cilium</location>
    </subcellularLocation>
    <subcellularLocation>
        <location evidence="1">Cytoplasm</location>
        <location evidence="1">Cytoskeleton</location>
        <location evidence="1">Microtubule organizing center</location>
        <location evidence="1">Centrosome</location>
        <location evidence="1">Centriole</location>
    </subcellularLocation>
    <subcellularLocation>
        <location evidence="1">Cytoplasm</location>
        <location evidence="1">Cytoskeleton</location>
        <location evidence="1">Spindle pole</location>
    </subcellularLocation>
    <subcellularLocation>
        <location evidence="1">Cell projection</location>
        <location evidence="1">Cilium</location>
        <location evidence="1">Flagellum</location>
    </subcellularLocation>
    <text evidence="1">Localized at the microtubule organizing centers in interphase and spindle poles in mitosis. Localized at the distal/subdistal appendages of mother centrioles.</text>
</comment>
<comment type="PTM">
    <text evidence="1 2">Tyrosine phosphorylated. Phosphorylated on Ser-95 by TSSK4.</text>
</comment>
<comment type="similarity">
    <text evidence="6">Belongs to the ODF2 family.</text>
</comment>